<dbReference type="EMBL" id="CP001089">
    <property type="protein sequence ID" value="ACD96424.1"/>
    <property type="molecule type" value="Genomic_DNA"/>
</dbReference>
<dbReference type="RefSeq" id="WP_012470753.1">
    <property type="nucleotide sequence ID" value="NC_010814.1"/>
</dbReference>
<dbReference type="SMR" id="B3E719"/>
<dbReference type="STRING" id="398767.Glov_2711"/>
<dbReference type="KEGG" id="glo:Glov_2711"/>
<dbReference type="eggNOG" id="COG0233">
    <property type="taxonomic scope" value="Bacteria"/>
</dbReference>
<dbReference type="HOGENOM" id="CLU_073981_2_0_7"/>
<dbReference type="OrthoDB" id="9804006at2"/>
<dbReference type="Proteomes" id="UP000002420">
    <property type="component" value="Chromosome"/>
</dbReference>
<dbReference type="GO" id="GO:0005829">
    <property type="term" value="C:cytosol"/>
    <property type="evidence" value="ECO:0007669"/>
    <property type="project" value="GOC"/>
</dbReference>
<dbReference type="GO" id="GO:0043023">
    <property type="term" value="F:ribosomal large subunit binding"/>
    <property type="evidence" value="ECO:0007669"/>
    <property type="project" value="TreeGrafter"/>
</dbReference>
<dbReference type="GO" id="GO:0002184">
    <property type="term" value="P:cytoplasmic translational termination"/>
    <property type="evidence" value="ECO:0007669"/>
    <property type="project" value="TreeGrafter"/>
</dbReference>
<dbReference type="CDD" id="cd00520">
    <property type="entry name" value="RRF"/>
    <property type="match status" value="1"/>
</dbReference>
<dbReference type="FunFam" id="1.10.132.20:FF:000001">
    <property type="entry name" value="Ribosome-recycling factor"/>
    <property type="match status" value="1"/>
</dbReference>
<dbReference type="FunFam" id="3.30.1360.40:FF:000001">
    <property type="entry name" value="Ribosome-recycling factor"/>
    <property type="match status" value="1"/>
</dbReference>
<dbReference type="Gene3D" id="3.30.1360.40">
    <property type="match status" value="1"/>
</dbReference>
<dbReference type="Gene3D" id="1.10.132.20">
    <property type="entry name" value="Ribosome-recycling factor"/>
    <property type="match status" value="1"/>
</dbReference>
<dbReference type="HAMAP" id="MF_00040">
    <property type="entry name" value="RRF"/>
    <property type="match status" value="1"/>
</dbReference>
<dbReference type="InterPro" id="IPR002661">
    <property type="entry name" value="Ribosome_recyc_fac"/>
</dbReference>
<dbReference type="InterPro" id="IPR023584">
    <property type="entry name" value="Ribosome_recyc_fac_dom"/>
</dbReference>
<dbReference type="InterPro" id="IPR036191">
    <property type="entry name" value="RRF_sf"/>
</dbReference>
<dbReference type="NCBIfam" id="TIGR00496">
    <property type="entry name" value="frr"/>
    <property type="match status" value="1"/>
</dbReference>
<dbReference type="PANTHER" id="PTHR20982:SF3">
    <property type="entry name" value="MITOCHONDRIAL RIBOSOME RECYCLING FACTOR PSEUDO 1"/>
    <property type="match status" value="1"/>
</dbReference>
<dbReference type="PANTHER" id="PTHR20982">
    <property type="entry name" value="RIBOSOME RECYCLING FACTOR"/>
    <property type="match status" value="1"/>
</dbReference>
<dbReference type="Pfam" id="PF01765">
    <property type="entry name" value="RRF"/>
    <property type="match status" value="1"/>
</dbReference>
<dbReference type="SUPFAM" id="SSF55194">
    <property type="entry name" value="Ribosome recycling factor, RRF"/>
    <property type="match status" value="1"/>
</dbReference>
<comment type="function">
    <text evidence="1">Responsible for the release of ribosomes from messenger RNA at the termination of protein biosynthesis. May increase the efficiency of translation by recycling ribosomes from one round of translation to another.</text>
</comment>
<comment type="subcellular location">
    <subcellularLocation>
        <location evidence="1">Cytoplasm</location>
    </subcellularLocation>
</comment>
<comment type="similarity">
    <text evidence="1">Belongs to the RRF family.</text>
</comment>
<gene>
    <name evidence="1" type="primary">frr</name>
    <name type="ordered locus">Glov_2711</name>
</gene>
<feature type="chain" id="PRO_1000090746" description="Ribosome-recycling factor">
    <location>
        <begin position="1"/>
        <end position="185"/>
    </location>
</feature>
<keyword id="KW-0963">Cytoplasm</keyword>
<keyword id="KW-0648">Protein biosynthesis</keyword>
<keyword id="KW-1185">Reference proteome</keyword>
<reference key="1">
    <citation type="submission" date="2008-05" db="EMBL/GenBank/DDBJ databases">
        <title>Complete sequence of chromosome of Geobacter lovleyi SZ.</title>
        <authorList>
            <consortium name="US DOE Joint Genome Institute"/>
            <person name="Lucas S."/>
            <person name="Copeland A."/>
            <person name="Lapidus A."/>
            <person name="Glavina del Rio T."/>
            <person name="Dalin E."/>
            <person name="Tice H."/>
            <person name="Bruce D."/>
            <person name="Goodwin L."/>
            <person name="Pitluck S."/>
            <person name="Chertkov O."/>
            <person name="Meincke L."/>
            <person name="Brettin T."/>
            <person name="Detter J.C."/>
            <person name="Han C."/>
            <person name="Tapia R."/>
            <person name="Kuske C.R."/>
            <person name="Schmutz J."/>
            <person name="Larimer F."/>
            <person name="Land M."/>
            <person name="Hauser L."/>
            <person name="Kyrpides N."/>
            <person name="Mikhailova N."/>
            <person name="Sung Y."/>
            <person name="Fletcher K.E."/>
            <person name="Ritalahti K.M."/>
            <person name="Loeffler F.E."/>
            <person name="Richardson P."/>
        </authorList>
    </citation>
    <scope>NUCLEOTIDE SEQUENCE [LARGE SCALE GENOMIC DNA]</scope>
    <source>
        <strain>ATCC BAA-1151 / DSM 17278 / SZ</strain>
    </source>
</reference>
<organism>
    <name type="scientific">Trichlorobacter lovleyi (strain ATCC BAA-1151 / DSM 17278 / SZ)</name>
    <name type="common">Geobacter lovleyi</name>
    <dbReference type="NCBI Taxonomy" id="398767"/>
    <lineage>
        <taxon>Bacteria</taxon>
        <taxon>Pseudomonadati</taxon>
        <taxon>Thermodesulfobacteriota</taxon>
        <taxon>Desulfuromonadia</taxon>
        <taxon>Geobacterales</taxon>
        <taxon>Geobacteraceae</taxon>
        <taxon>Trichlorobacter</taxon>
    </lineage>
</organism>
<sequence length="185" mass="21113">MYKSVITEMKAHMEKSVEDLRKEYQRIRTGRASTSLLDEVKVDYYGNPSSLSQVATLAVPEPRTITITPWESKMIGPIEKAILNANLGLTPGNDGKLIRLNLPPLTEERRKEIVKGMKKMDEDHKVAVRNIRRKAIDDLKKMEKDKSITEDELKKAEKEVQTVTDSIIAKLDEILAHKEKEVMEV</sequence>
<proteinExistence type="inferred from homology"/>
<name>RRF_TRIL1</name>
<evidence type="ECO:0000255" key="1">
    <source>
        <dbReference type="HAMAP-Rule" id="MF_00040"/>
    </source>
</evidence>
<accession>B3E719</accession>
<protein>
    <recommendedName>
        <fullName evidence="1">Ribosome-recycling factor</fullName>
        <shortName evidence="1">RRF</shortName>
    </recommendedName>
    <alternativeName>
        <fullName evidence="1">Ribosome-releasing factor</fullName>
    </alternativeName>
</protein>